<gene>
    <name evidence="1" type="primary">kbaZ</name>
    <name type="ordered locus">EFER_4361</name>
</gene>
<accession>B7LMV1</accession>
<proteinExistence type="inferred from homology"/>
<evidence type="ECO:0000255" key="1">
    <source>
        <dbReference type="HAMAP-Rule" id="MF_01295"/>
    </source>
</evidence>
<dbReference type="EMBL" id="CU928158">
    <property type="protein sequence ID" value="CAQ91779.1"/>
    <property type="molecule type" value="Genomic_DNA"/>
</dbReference>
<dbReference type="RefSeq" id="WP_000681964.1">
    <property type="nucleotide sequence ID" value="NC_011740.1"/>
</dbReference>
<dbReference type="SMR" id="B7LMV1"/>
<dbReference type="GeneID" id="75059053"/>
<dbReference type="KEGG" id="efe:EFER_4361"/>
<dbReference type="HOGENOM" id="CLU_053334_0_0_6"/>
<dbReference type="OrthoDB" id="1672942at2"/>
<dbReference type="UniPathway" id="UPA00704">
    <property type="reaction ID" value="UER00716"/>
</dbReference>
<dbReference type="Proteomes" id="UP000000745">
    <property type="component" value="Chromosome"/>
</dbReference>
<dbReference type="GO" id="GO:0005886">
    <property type="term" value="C:plasma membrane"/>
    <property type="evidence" value="ECO:0007669"/>
    <property type="project" value="TreeGrafter"/>
</dbReference>
<dbReference type="GO" id="GO:0005975">
    <property type="term" value="P:carbohydrate metabolic process"/>
    <property type="evidence" value="ECO:0007669"/>
    <property type="project" value="InterPro"/>
</dbReference>
<dbReference type="GO" id="GO:2001059">
    <property type="term" value="P:D-tagatose 6-phosphate catabolic process"/>
    <property type="evidence" value="ECO:0007669"/>
    <property type="project" value="UniProtKB-UniRule"/>
</dbReference>
<dbReference type="GO" id="GO:0009401">
    <property type="term" value="P:phosphoenolpyruvate-dependent sugar phosphotransferase system"/>
    <property type="evidence" value="ECO:0007669"/>
    <property type="project" value="TreeGrafter"/>
</dbReference>
<dbReference type="Gene3D" id="3.20.20.70">
    <property type="entry name" value="Aldolase class I"/>
    <property type="match status" value="1"/>
</dbReference>
<dbReference type="Gene3D" id="1.10.400.20">
    <property type="entry name" value="putative tagatose 6-phosphate kinase domain like"/>
    <property type="match status" value="1"/>
</dbReference>
<dbReference type="HAMAP" id="MF_01295">
    <property type="entry name" value="Tagatose_aldol_KbaZ"/>
    <property type="match status" value="1"/>
</dbReference>
<dbReference type="InterPro" id="IPR013785">
    <property type="entry name" value="Aldolase_TIM"/>
</dbReference>
<dbReference type="InterPro" id="IPR012062">
    <property type="entry name" value="GatZ/KbaZ-like"/>
</dbReference>
<dbReference type="InterPro" id="IPR050303">
    <property type="entry name" value="GatZ_KbaZ_carbometab"/>
</dbReference>
<dbReference type="InterPro" id="IPR023435">
    <property type="entry name" value="TagBP_ald_KbaZ"/>
</dbReference>
<dbReference type="NCBIfam" id="TIGR02810">
    <property type="entry name" value="agaZ_gatZ"/>
    <property type="match status" value="1"/>
</dbReference>
<dbReference type="NCBIfam" id="NF012002">
    <property type="entry name" value="PRK15458.1"/>
    <property type="match status" value="1"/>
</dbReference>
<dbReference type="PANTHER" id="PTHR32502:SF2">
    <property type="entry name" value="D-TAGATOSE-1,6-BISPHOSPHATE ALDOLASE SUBUNIT KBAZ"/>
    <property type="match status" value="1"/>
</dbReference>
<dbReference type="PANTHER" id="PTHR32502">
    <property type="entry name" value="N-ACETYLGALACTOSAMINE PERMEASE II COMPONENT-RELATED"/>
    <property type="match status" value="1"/>
</dbReference>
<dbReference type="Pfam" id="PF08013">
    <property type="entry name" value="GatZ_KbaZ-like"/>
    <property type="match status" value="1"/>
</dbReference>
<dbReference type="PIRSF" id="PIRSF009264">
    <property type="entry name" value="TagBP_ald_AgaZ"/>
    <property type="match status" value="1"/>
</dbReference>
<dbReference type="SUPFAM" id="SSF51569">
    <property type="entry name" value="Aldolase"/>
    <property type="match status" value="1"/>
</dbReference>
<comment type="function">
    <text evidence="1">Component of the tagatose-1,6-bisphosphate aldolase KbaYZ that is required for full activity and stability of the Y subunit. Could have a chaperone-like function for the proper and stable folding of KbaY. When expressed alone, KbaZ does not show any aldolase activity.</text>
</comment>
<comment type="pathway">
    <text evidence="1">Carbohydrate metabolism; D-tagatose 6-phosphate degradation; D-glyceraldehyde 3-phosphate and glycerone phosphate from D-tagatose 6-phosphate: step 2/2.</text>
</comment>
<comment type="subunit">
    <text evidence="1">Forms a complex with KbaY.</text>
</comment>
<comment type="similarity">
    <text evidence="1">Belongs to the GatZ/KbaZ family. KbaZ subfamily.</text>
</comment>
<sequence>MKHLTEMVRRHKEGKTNGIYAVCSAHPLVLEAAIRYACANQTPLLIEATSNQVDQFGGYTGMTPADFRGFVCQLAESLNFPQDALILGGDHLGPNRWQNLPAAQAMANADDLIKSYVAAGFKKIHLDCSMSCQDDPVPLTDDIVAERAARLAKVAEETCREHFGEADLVYVIGTEVPVPGGAHETLSELAVTTPDAARATLEAHRHAFEKQGLSAIWPRIIALVVQPGVEFDHTNVIDYQPVKATALSQMVENYETLIFEAHSTDYQTPQSLRQLVIDHFAILKVGPALTFALREALFSLAAIEEELVPAKACSGLRQVLENVMLDRPEYWQSHYHGDGNARRLARGYSYSDRVRYYWPDSQIDDAFAHLVRNLADSPIPLPLISQYLPLQYVKVRSGELQPTPRELIINHIQDILAQYRTACEGQ</sequence>
<reference key="1">
    <citation type="journal article" date="2009" name="PLoS Genet.">
        <title>Organised genome dynamics in the Escherichia coli species results in highly diverse adaptive paths.</title>
        <authorList>
            <person name="Touchon M."/>
            <person name="Hoede C."/>
            <person name="Tenaillon O."/>
            <person name="Barbe V."/>
            <person name="Baeriswyl S."/>
            <person name="Bidet P."/>
            <person name="Bingen E."/>
            <person name="Bonacorsi S."/>
            <person name="Bouchier C."/>
            <person name="Bouvet O."/>
            <person name="Calteau A."/>
            <person name="Chiapello H."/>
            <person name="Clermont O."/>
            <person name="Cruveiller S."/>
            <person name="Danchin A."/>
            <person name="Diard M."/>
            <person name="Dossat C."/>
            <person name="Karoui M.E."/>
            <person name="Frapy E."/>
            <person name="Garry L."/>
            <person name="Ghigo J.M."/>
            <person name="Gilles A.M."/>
            <person name="Johnson J."/>
            <person name="Le Bouguenec C."/>
            <person name="Lescat M."/>
            <person name="Mangenot S."/>
            <person name="Martinez-Jehanne V."/>
            <person name="Matic I."/>
            <person name="Nassif X."/>
            <person name="Oztas S."/>
            <person name="Petit M.A."/>
            <person name="Pichon C."/>
            <person name="Rouy Z."/>
            <person name="Ruf C.S."/>
            <person name="Schneider D."/>
            <person name="Tourret J."/>
            <person name="Vacherie B."/>
            <person name="Vallenet D."/>
            <person name="Medigue C."/>
            <person name="Rocha E.P.C."/>
            <person name="Denamur E."/>
        </authorList>
    </citation>
    <scope>NUCLEOTIDE SEQUENCE [LARGE SCALE GENOMIC DNA]</scope>
    <source>
        <strain>ATCC 35469 / DSM 13698 / BCRC 15582 / CCUG 18766 / IAM 14443 / JCM 21226 / LMG 7866 / NBRC 102419 / NCTC 12128 / CDC 0568-73</strain>
    </source>
</reference>
<organism>
    <name type="scientific">Escherichia fergusonii (strain ATCC 35469 / DSM 13698 / CCUG 18766 / IAM 14443 / JCM 21226 / LMG 7866 / NBRC 102419 / NCTC 12128 / CDC 0568-73)</name>
    <dbReference type="NCBI Taxonomy" id="585054"/>
    <lineage>
        <taxon>Bacteria</taxon>
        <taxon>Pseudomonadati</taxon>
        <taxon>Pseudomonadota</taxon>
        <taxon>Gammaproteobacteria</taxon>
        <taxon>Enterobacterales</taxon>
        <taxon>Enterobacteriaceae</taxon>
        <taxon>Escherichia</taxon>
    </lineage>
</organism>
<name>KBAZ_ESCF3</name>
<protein>
    <recommendedName>
        <fullName evidence="1">D-tagatose-1,6-bisphosphate aldolase subunit KbaZ</fullName>
    </recommendedName>
</protein>
<feature type="chain" id="PRO_0000372543" description="D-tagatose-1,6-bisphosphate aldolase subunit KbaZ">
    <location>
        <begin position="1"/>
        <end position="426"/>
    </location>
</feature>